<proteinExistence type="evidence at transcript level"/>
<comment type="function">
    <text>Nematode cuticles are composed largely of collagen-like proteins. The cuticle functions both as an exoskeleton and as a barrier to protect the worm from its environment.</text>
</comment>
<comment type="subunit">
    <text>Collagen polypeptide chains are complexed within the cuticle by disulfide bonds and other types of covalent cross-links.</text>
</comment>
<comment type="similarity">
    <text evidence="2">Belongs to the cuticular collagen family.</text>
</comment>
<organism>
    <name type="scientific">Caenorhabditis elegans</name>
    <dbReference type="NCBI Taxonomy" id="6239"/>
    <lineage>
        <taxon>Eukaryota</taxon>
        <taxon>Metazoa</taxon>
        <taxon>Ecdysozoa</taxon>
        <taxon>Nematoda</taxon>
        <taxon>Chromadorea</taxon>
        <taxon>Rhabditida</taxon>
        <taxon>Rhabditina</taxon>
        <taxon>Rhabditomorpha</taxon>
        <taxon>Rhabditoidea</taxon>
        <taxon>Rhabditidae</taxon>
        <taxon>Peloderinae</taxon>
        <taxon>Caenorhabditis</taxon>
    </lineage>
</organism>
<sequence>MDLETRIKAYRFVAYSAVAFSVVAVISVCVTLPMVYNYVHHVKRTMHNEITFCKGSAKDIWNEVHALKSLPNSNRTARQAYNDAAVTGGGAQSGSCESCCLPGPPGPAGTPGKPGRPGKPGAPGLPGNPGRPPQQPCEPITPPPCKPCPQGPPGPPGPPGPPGDSGEPGSPGLPGQDAAPGEPGPKGPPGPPGAPGAPGTPGEPGVPAQSEPLIPGEPGPPGEAGPQGPPGSPGQPGADGSPGQPGPKGPNGPDGQPGADGNPGAPGPAGPPGSPGERGICPKYCAIDGGVFFEDGTRR</sequence>
<dbReference type="EMBL" id="M80650">
    <property type="protein sequence ID" value="AAA27985.1"/>
    <property type="molecule type" value="Genomic_DNA"/>
</dbReference>
<dbReference type="EMBL" id="AF410845">
    <property type="protein sequence ID" value="AAL76233.1"/>
    <property type="molecule type" value="mRNA"/>
</dbReference>
<dbReference type="EMBL" id="FO081153">
    <property type="protein sequence ID" value="CCD69528.1"/>
    <property type="molecule type" value="Genomic_DNA"/>
</dbReference>
<dbReference type="PIR" id="JC1448">
    <property type="entry name" value="JC1448"/>
</dbReference>
<dbReference type="PIR" id="T29956">
    <property type="entry name" value="T29956"/>
</dbReference>
<dbReference type="RefSeq" id="NP_500520.1">
    <property type="nucleotide sequence ID" value="NM_068119.6"/>
</dbReference>
<dbReference type="SMR" id="P34687"/>
<dbReference type="FunCoup" id="P34687">
    <property type="interactions" value="21"/>
</dbReference>
<dbReference type="STRING" id="6239.F36A4.10.1"/>
<dbReference type="PaxDb" id="6239-F36A4.10"/>
<dbReference type="PeptideAtlas" id="P34687"/>
<dbReference type="EnsemblMetazoa" id="F36A4.10.1">
    <property type="protein sequence ID" value="F36A4.10.1"/>
    <property type="gene ID" value="WBGene00000611"/>
</dbReference>
<dbReference type="GeneID" id="177188"/>
<dbReference type="KEGG" id="cel:CELE_F36A4.10"/>
<dbReference type="UCSC" id="F36A4.10">
    <property type="organism name" value="c. elegans"/>
</dbReference>
<dbReference type="AGR" id="WB:WBGene00000611"/>
<dbReference type="CTD" id="177188"/>
<dbReference type="WormBase" id="F36A4.10">
    <property type="protein sequence ID" value="CE07185"/>
    <property type="gene ID" value="WBGene00000611"/>
    <property type="gene designation" value="col-34"/>
</dbReference>
<dbReference type="eggNOG" id="KOG3544">
    <property type="taxonomic scope" value="Eukaryota"/>
</dbReference>
<dbReference type="GeneTree" id="ENSGT00970000195912"/>
<dbReference type="HOGENOM" id="CLU_001074_4_2_1"/>
<dbReference type="InParanoid" id="P34687"/>
<dbReference type="OMA" id="LGCNPAH"/>
<dbReference type="OrthoDB" id="5920520at2759"/>
<dbReference type="PhylomeDB" id="P34687"/>
<dbReference type="PRO" id="PR:P34687"/>
<dbReference type="Proteomes" id="UP000001940">
    <property type="component" value="Chromosome IV"/>
</dbReference>
<dbReference type="Bgee" id="WBGene00000611">
    <property type="expression patterns" value="Expressed in pharyngeal muscle cell (C elegans) and 3 other cell types or tissues"/>
</dbReference>
<dbReference type="GO" id="GO:0005581">
    <property type="term" value="C:collagen trimer"/>
    <property type="evidence" value="ECO:0007669"/>
    <property type="project" value="UniProtKB-KW"/>
</dbReference>
<dbReference type="GO" id="GO:0005576">
    <property type="term" value="C:extracellular region"/>
    <property type="evidence" value="ECO:0000303"/>
    <property type="project" value="UniProtKB"/>
</dbReference>
<dbReference type="GO" id="GO:0042302">
    <property type="term" value="F:structural constituent of cuticle"/>
    <property type="evidence" value="ECO:0000303"/>
    <property type="project" value="UniProtKB"/>
</dbReference>
<dbReference type="GO" id="GO:0040002">
    <property type="term" value="P:collagen and cuticulin-based cuticle development"/>
    <property type="evidence" value="ECO:0000303"/>
    <property type="project" value="UniProtKB"/>
</dbReference>
<dbReference type="InterPro" id="IPR002486">
    <property type="entry name" value="Col_cuticle_N"/>
</dbReference>
<dbReference type="InterPro" id="IPR008160">
    <property type="entry name" value="Collagen"/>
</dbReference>
<dbReference type="PANTHER" id="PTHR24637">
    <property type="entry name" value="COLLAGEN"/>
    <property type="match status" value="1"/>
</dbReference>
<dbReference type="PANTHER" id="PTHR24637:SF262">
    <property type="entry name" value="CUTICLE COLLAGEN 34-RELATED"/>
    <property type="match status" value="1"/>
</dbReference>
<dbReference type="Pfam" id="PF01484">
    <property type="entry name" value="Col_cuticle_N"/>
    <property type="match status" value="1"/>
</dbReference>
<dbReference type="Pfam" id="PF01391">
    <property type="entry name" value="Collagen"/>
    <property type="match status" value="2"/>
</dbReference>
<dbReference type="SMART" id="SM01088">
    <property type="entry name" value="Col_cuticle_N"/>
    <property type="match status" value="1"/>
</dbReference>
<keyword id="KW-0176">Collagen</keyword>
<keyword id="KW-0193">Cuticle</keyword>
<keyword id="KW-1015">Disulfide bond</keyword>
<keyword id="KW-1185">Reference proteome</keyword>
<keyword id="KW-0677">Repeat</keyword>
<reference key="1">
    <citation type="journal article" date="1992" name="Gene">
        <title>Sequence comparison of the Caenorhabditis elegans dpy-13 and col-34 genes, and their deduced collagen products.</title>
        <authorList>
            <person name="Bird D.M."/>
        </authorList>
    </citation>
    <scope>NUCLEOTIDE SEQUENCE [GENOMIC DNA]</scope>
    <source>
        <strain>Bristol N2</strain>
    </source>
</reference>
<reference key="2">
    <citation type="submission" date="2001-08" db="EMBL/GenBank/DDBJ databases">
        <title>RAM-4, a collagen, is involved in ray morphogenesis of Caenorhabditis elegans male tail.</title>
        <authorList>
            <person name="Yu R.Y."/>
            <person name="Chow K.L."/>
        </authorList>
    </citation>
    <scope>NUCLEOTIDE SEQUENCE [MRNA]</scope>
</reference>
<reference key="3">
    <citation type="journal article" date="1998" name="Science">
        <title>Genome sequence of the nematode C. elegans: a platform for investigating biology.</title>
        <authorList>
            <consortium name="The C. elegans sequencing consortium"/>
        </authorList>
    </citation>
    <scope>NUCLEOTIDE SEQUENCE [LARGE SCALE GENOMIC DNA]</scope>
    <source>
        <strain>Bristol N2</strain>
    </source>
</reference>
<name>COL34_CAEEL</name>
<evidence type="ECO:0000256" key="1">
    <source>
        <dbReference type="SAM" id="MobiDB-lite"/>
    </source>
</evidence>
<evidence type="ECO:0000305" key="2"/>
<protein>
    <recommendedName>
        <fullName>Cuticle collagen 34</fullName>
    </recommendedName>
    <alternativeName>
        <fullName>Abnormal ray morphology protein 4</fullName>
    </alternativeName>
</protein>
<feature type="chain" id="PRO_0000127592" description="Cuticle collagen 34">
    <location>
        <begin position="1"/>
        <end position="299"/>
    </location>
</feature>
<feature type="region of interest" description="Disordered" evidence="1">
    <location>
        <begin position="105"/>
        <end position="282"/>
    </location>
</feature>
<feature type="region of interest" description="Triple-helical region">
    <location>
        <begin position="216"/>
        <end position="278"/>
    </location>
</feature>
<feature type="compositionally biased region" description="Pro residues" evidence="1">
    <location>
        <begin position="129"/>
        <end position="162"/>
    </location>
</feature>
<feature type="compositionally biased region" description="Low complexity" evidence="1">
    <location>
        <begin position="164"/>
        <end position="181"/>
    </location>
</feature>
<feature type="compositionally biased region" description="Pro residues" evidence="1">
    <location>
        <begin position="182"/>
        <end position="195"/>
    </location>
</feature>
<feature type="compositionally biased region" description="Pro residues" evidence="1">
    <location>
        <begin position="215"/>
        <end position="233"/>
    </location>
</feature>
<feature type="compositionally biased region" description="Low complexity" evidence="1">
    <location>
        <begin position="251"/>
        <end position="263"/>
    </location>
</feature>
<feature type="compositionally biased region" description="Pro residues" evidence="1">
    <location>
        <begin position="265"/>
        <end position="274"/>
    </location>
</feature>
<feature type="sequence conflict" description="In Ref. 1; AAA27985." evidence="2" ref="1">
    <original>C</original>
    <variation>W</variation>
    <location>
        <position position="145"/>
    </location>
</feature>
<feature type="sequence conflict" description="In Ref. 1; AAA27985." evidence="2" ref="1">
    <original>P</original>
    <variation>K</variation>
    <location>
        <position position="189"/>
    </location>
</feature>
<feature type="sequence conflict" description="In Ref. 1; AAA27985." evidence="2" ref="1">
    <original>GTPGEPGVPAQS</original>
    <variation>EHQESQECPRG</variation>
    <location>
        <begin position="199"/>
        <end position="210"/>
    </location>
</feature>
<gene>
    <name type="primary">col-34</name>
    <name type="synonym">ram-4</name>
    <name type="ORF">F36A4.10</name>
</gene>
<accession>P34687</accession>
<accession>Q20087</accession>